<sequence>MPFIKAVKSSPYFSRYQTKYRRRREGKTDYYARKRLIAQAKNKYNAPKYRLVVRFSNRFVTCQIVSSRVNGDYVLAHAHSSELPRYGIKWGLANWTAAYATGLLVARRALAKVGLADKYEGVTEPEGEFELTEAIEDGPRPFKVFLDVGLKRTSTGSRVFGAMKGASDGGLFIPHSPNRFPGFDIETEELDDETLRKYIYGGHVAEYMEMLIDDDEERYQKQFSGLIADGIESDQLEDIYAEAYAKIREDPSFQKSGKDAAAFKAESLKYTQRKLTAEERKERFNAKVIEAGRA</sequence>
<name>RL5B_SCHPO</name>
<dbReference type="EMBL" id="CU329671">
    <property type="protein sequence ID" value="CAA20691.1"/>
    <property type="molecule type" value="Genomic_DNA"/>
</dbReference>
<dbReference type="EMBL" id="AB016045">
    <property type="protein sequence ID" value="BAA31570.1"/>
    <property type="molecule type" value="mRNA"/>
</dbReference>
<dbReference type="PIR" id="T39325">
    <property type="entry name" value="T39325"/>
</dbReference>
<dbReference type="PIR" id="T43382">
    <property type="entry name" value="T43382"/>
</dbReference>
<dbReference type="RefSeq" id="NP_596399.1">
    <property type="nucleotide sequence ID" value="NM_001022319.2"/>
</dbReference>
<dbReference type="PDB" id="9AXT">
    <property type="method" value="EM"/>
    <property type="resolution" value="2.40 A"/>
    <property type="chains" value="BQ=1-294"/>
</dbReference>
<dbReference type="PDB" id="9AXU">
    <property type="method" value="EM"/>
    <property type="resolution" value="1.94 A"/>
    <property type="chains" value="Q=1-294"/>
</dbReference>
<dbReference type="PDB" id="9AXV">
    <property type="method" value="EM"/>
    <property type="resolution" value="2.40 A"/>
    <property type="chains" value="BQ=1-294"/>
</dbReference>
<dbReference type="PDBsum" id="9AXT"/>
<dbReference type="PDBsum" id="9AXU"/>
<dbReference type="PDBsum" id="9AXV"/>
<dbReference type="EMDB" id="EMD-43972"/>
<dbReference type="EMDB" id="EMD-43973"/>
<dbReference type="EMDB" id="EMD-43976"/>
<dbReference type="SMR" id="O74306"/>
<dbReference type="BioGRID" id="276235">
    <property type="interactions" value="4"/>
</dbReference>
<dbReference type="FunCoup" id="O74306">
    <property type="interactions" value="571"/>
</dbReference>
<dbReference type="STRING" id="284812.O74306"/>
<dbReference type="iPTMnet" id="O74306"/>
<dbReference type="PaxDb" id="4896-SPBC11C11.09c.1"/>
<dbReference type="EnsemblFungi" id="SPBC11C11.09c.1">
    <property type="protein sequence ID" value="SPBC11C11.09c.1:pep"/>
    <property type="gene ID" value="SPBC11C11.09c"/>
</dbReference>
<dbReference type="GeneID" id="2539680"/>
<dbReference type="KEGG" id="spo:2539680"/>
<dbReference type="PomBase" id="SPBC11C11.09c">
    <property type="gene designation" value="rpl502"/>
</dbReference>
<dbReference type="VEuPathDB" id="FungiDB:SPBC11C11.09c"/>
<dbReference type="eggNOG" id="KOG0875">
    <property type="taxonomic scope" value="Eukaryota"/>
</dbReference>
<dbReference type="HOGENOM" id="CLU_056222_1_0_1"/>
<dbReference type="InParanoid" id="O74306"/>
<dbReference type="OMA" id="CQIASAH"/>
<dbReference type="PhylomeDB" id="O74306"/>
<dbReference type="Reactome" id="R-SPO-156827">
    <property type="pathway name" value="L13a-mediated translational silencing of Ceruloplasmin expression"/>
</dbReference>
<dbReference type="Reactome" id="R-SPO-1799339">
    <property type="pathway name" value="SRP-dependent cotranslational protein targeting to membrane"/>
</dbReference>
<dbReference type="Reactome" id="R-SPO-72689">
    <property type="pathway name" value="Formation of a pool of free 40S subunits"/>
</dbReference>
<dbReference type="Reactome" id="R-SPO-72706">
    <property type="pathway name" value="GTP hydrolysis and joining of the 60S ribosomal subunit"/>
</dbReference>
<dbReference type="Reactome" id="R-SPO-975956">
    <property type="pathway name" value="Nonsense Mediated Decay (NMD) independent of the Exon Junction Complex (EJC)"/>
</dbReference>
<dbReference type="Reactome" id="R-SPO-975957">
    <property type="pathway name" value="Nonsense Mediated Decay (NMD) enhanced by the Exon Junction Complex (EJC)"/>
</dbReference>
<dbReference type="PRO" id="PR:O74306"/>
<dbReference type="Proteomes" id="UP000002485">
    <property type="component" value="Chromosome II"/>
</dbReference>
<dbReference type="GO" id="GO:0005829">
    <property type="term" value="C:cytosol"/>
    <property type="evidence" value="ECO:0007005"/>
    <property type="project" value="PomBase"/>
</dbReference>
<dbReference type="GO" id="GO:0022625">
    <property type="term" value="C:cytosolic large ribosomal subunit"/>
    <property type="evidence" value="ECO:0000269"/>
    <property type="project" value="PomBase"/>
</dbReference>
<dbReference type="GO" id="GO:0005634">
    <property type="term" value="C:nucleus"/>
    <property type="evidence" value="ECO:0007669"/>
    <property type="project" value="UniProtKB-SubCell"/>
</dbReference>
<dbReference type="GO" id="GO:0008097">
    <property type="term" value="F:5S rRNA binding"/>
    <property type="evidence" value="ECO:0000318"/>
    <property type="project" value="GO_Central"/>
</dbReference>
<dbReference type="GO" id="GO:0003735">
    <property type="term" value="F:structural constituent of ribosome"/>
    <property type="evidence" value="ECO:0000318"/>
    <property type="project" value="GO_Central"/>
</dbReference>
<dbReference type="GO" id="GO:0002181">
    <property type="term" value="P:cytoplasmic translation"/>
    <property type="evidence" value="ECO:0000315"/>
    <property type="project" value="PomBase"/>
</dbReference>
<dbReference type="GO" id="GO:0000027">
    <property type="term" value="P:ribosomal large subunit assembly"/>
    <property type="evidence" value="ECO:0000318"/>
    <property type="project" value="GO_Central"/>
</dbReference>
<dbReference type="CDD" id="cd00432">
    <property type="entry name" value="Ribosomal_L18_L5e"/>
    <property type="match status" value="1"/>
</dbReference>
<dbReference type="FunFam" id="3.30.420.100:FF:000002">
    <property type="entry name" value="60S ribosomal protein L5"/>
    <property type="match status" value="1"/>
</dbReference>
<dbReference type="Gene3D" id="3.30.420.100">
    <property type="match status" value="1"/>
</dbReference>
<dbReference type="HAMAP" id="MF_01337_A">
    <property type="entry name" value="Ribosomal_uL18_A"/>
    <property type="match status" value="1"/>
</dbReference>
<dbReference type="InterPro" id="IPR005485">
    <property type="entry name" value="Rbsml_uL18_euk"/>
</dbReference>
<dbReference type="InterPro" id="IPR025607">
    <property type="entry name" value="Ribosomal_uL18_C_euk"/>
</dbReference>
<dbReference type="PANTHER" id="PTHR23410:SF12">
    <property type="entry name" value="LARGE RIBOSOMAL SUBUNIT PROTEIN UL18"/>
    <property type="match status" value="1"/>
</dbReference>
<dbReference type="PANTHER" id="PTHR23410">
    <property type="entry name" value="RIBOSOMAL PROTEIN L5-RELATED"/>
    <property type="match status" value="1"/>
</dbReference>
<dbReference type="Pfam" id="PF14204">
    <property type="entry name" value="Ribosomal_L18_c"/>
    <property type="match status" value="1"/>
</dbReference>
<dbReference type="Pfam" id="PF17144">
    <property type="entry name" value="Ribosomal_L5e"/>
    <property type="match status" value="1"/>
</dbReference>
<dbReference type="PRINTS" id="PR00058">
    <property type="entry name" value="RIBOSOMALL5"/>
</dbReference>
<dbReference type="SUPFAM" id="SSF53137">
    <property type="entry name" value="Translational machinery components"/>
    <property type="match status" value="1"/>
</dbReference>
<gene>
    <name type="primary">rpl502</name>
    <name type="synonym">rpl5b</name>
    <name type="ORF">SPBC11C11.09c</name>
</gene>
<accession>O74306</accession>
<accession>Q76N21</accession>
<evidence type="ECO:0000250" key="1">
    <source>
        <dbReference type="UniProtKB" id="P26321"/>
    </source>
</evidence>
<evidence type="ECO:0000269" key="2">
    <source>
    </source>
</evidence>
<evidence type="ECO:0000305" key="3"/>
<feature type="chain" id="PRO_0000131453" description="Large ribosomal subunit protein uL18B">
    <location>
        <begin position="1"/>
        <end position="294"/>
    </location>
</feature>
<comment type="function">
    <text evidence="1">Component of the ribosome, a large ribonucleoprotein complex responsible for the synthesis of proteins in the cell. The small ribosomal subunit (SSU) binds messenger RNAs (mRNAs) and translates the encoded message by selecting cognate aminoacyl-transfer RNA (tRNA) molecules. The large subunit (LSU) contains the ribosomal catalytic site termed the peptidyl transferase center (PTC), which catalyzes the formation of peptide bonds, thereby polymerizing the amino acids delivered by tRNAs into a polypeptide chain. The nascent polypeptides leave the ribosome through a tunnel in the LSU and interact with protein factors that function in enzymatic processing, targeting, and the membrane insertion of nascent chains at the exit of the ribosomal tunnel.</text>
</comment>
<comment type="subunit">
    <text evidence="1">Component of the large ribosomal subunit (LSU). Mature yeast ribosomes consist of a small (40S) and a large (60S) subunit. The 40S small subunit contains 1 molecule of ribosomal RNA (18S rRNA) and 33 different proteins (encoded by 57 genes). The large 60S subunit contains 3 rRNA molecules (25S, 5.8S and 5S rRNA) and 46 different proteins (encoded by 81 genes) (By similarity). Component of a hexameric 5S RNP precursor complex, composed of 5S RNA, rrs1, rpf2, rpl5a/rpl5b, rpl11a/rpl11b and syo1; this complex acts as a precursor for ribosome assembly (By similarity). rpl5a/rpl5b/uL18 forms a heterotrimeric complex with syo1 and rpl11a/rpl11b/uL5. Interaction of this complex with KAP104 allows the nuclear import of the heterotrimer (By similarity).</text>
</comment>
<comment type="subcellular location">
    <subcellularLocation>
        <location evidence="2">Cytoplasm</location>
    </subcellularLocation>
    <subcellularLocation>
        <location evidence="1">Nucleus</location>
    </subcellularLocation>
</comment>
<comment type="miscellaneous">
    <text>There are 2 genes for uL18 in S.pombe.</text>
</comment>
<comment type="similarity">
    <text evidence="3">Belongs to the universal ribosomal protein uL18 family.</text>
</comment>
<protein>
    <recommendedName>
        <fullName evidence="3">Large ribosomal subunit protein uL18B</fullName>
    </recommendedName>
    <alternativeName>
        <fullName>60S ribosomal protein L5-B</fullName>
    </alternativeName>
</protein>
<keyword id="KW-0002">3D-structure</keyword>
<keyword id="KW-0963">Cytoplasm</keyword>
<keyword id="KW-0539">Nucleus</keyword>
<keyword id="KW-1185">Reference proteome</keyword>
<keyword id="KW-0687">Ribonucleoprotein</keyword>
<keyword id="KW-0689">Ribosomal protein</keyword>
<keyword id="KW-0694">RNA-binding</keyword>
<keyword id="KW-0699">rRNA-binding</keyword>
<proteinExistence type="evidence at protein level"/>
<organism>
    <name type="scientific">Schizosaccharomyces pombe (strain 972 / ATCC 24843)</name>
    <name type="common">Fission yeast</name>
    <dbReference type="NCBI Taxonomy" id="284812"/>
    <lineage>
        <taxon>Eukaryota</taxon>
        <taxon>Fungi</taxon>
        <taxon>Dikarya</taxon>
        <taxon>Ascomycota</taxon>
        <taxon>Taphrinomycotina</taxon>
        <taxon>Schizosaccharomycetes</taxon>
        <taxon>Schizosaccharomycetales</taxon>
        <taxon>Schizosaccharomycetaceae</taxon>
        <taxon>Schizosaccharomyces</taxon>
    </lineage>
</organism>
<reference key="1">
    <citation type="journal article" date="2002" name="Nature">
        <title>The genome sequence of Schizosaccharomyces pombe.</title>
        <authorList>
            <person name="Wood V."/>
            <person name="Gwilliam R."/>
            <person name="Rajandream M.A."/>
            <person name="Lyne M.H."/>
            <person name="Lyne R."/>
            <person name="Stewart A."/>
            <person name="Sgouros J.G."/>
            <person name="Peat N."/>
            <person name="Hayles J."/>
            <person name="Baker S.G."/>
            <person name="Basham D."/>
            <person name="Bowman S."/>
            <person name="Brooks K."/>
            <person name="Brown D."/>
            <person name="Brown S."/>
            <person name="Chillingworth T."/>
            <person name="Churcher C.M."/>
            <person name="Collins M."/>
            <person name="Connor R."/>
            <person name="Cronin A."/>
            <person name="Davis P."/>
            <person name="Feltwell T."/>
            <person name="Fraser A."/>
            <person name="Gentles S."/>
            <person name="Goble A."/>
            <person name="Hamlin N."/>
            <person name="Harris D.E."/>
            <person name="Hidalgo J."/>
            <person name="Hodgson G."/>
            <person name="Holroyd S."/>
            <person name="Hornsby T."/>
            <person name="Howarth S."/>
            <person name="Huckle E.J."/>
            <person name="Hunt S."/>
            <person name="Jagels K."/>
            <person name="James K.D."/>
            <person name="Jones L."/>
            <person name="Jones M."/>
            <person name="Leather S."/>
            <person name="McDonald S."/>
            <person name="McLean J."/>
            <person name="Mooney P."/>
            <person name="Moule S."/>
            <person name="Mungall K.L."/>
            <person name="Murphy L.D."/>
            <person name="Niblett D."/>
            <person name="Odell C."/>
            <person name="Oliver K."/>
            <person name="O'Neil S."/>
            <person name="Pearson D."/>
            <person name="Quail M.A."/>
            <person name="Rabbinowitsch E."/>
            <person name="Rutherford K.M."/>
            <person name="Rutter S."/>
            <person name="Saunders D."/>
            <person name="Seeger K."/>
            <person name="Sharp S."/>
            <person name="Skelton J."/>
            <person name="Simmonds M.N."/>
            <person name="Squares R."/>
            <person name="Squares S."/>
            <person name="Stevens K."/>
            <person name="Taylor K."/>
            <person name="Taylor R.G."/>
            <person name="Tivey A."/>
            <person name="Walsh S.V."/>
            <person name="Warren T."/>
            <person name="Whitehead S."/>
            <person name="Woodward J.R."/>
            <person name="Volckaert G."/>
            <person name="Aert R."/>
            <person name="Robben J."/>
            <person name="Grymonprez B."/>
            <person name="Weltjens I."/>
            <person name="Vanstreels E."/>
            <person name="Rieger M."/>
            <person name="Schaefer M."/>
            <person name="Mueller-Auer S."/>
            <person name="Gabel C."/>
            <person name="Fuchs M."/>
            <person name="Duesterhoeft A."/>
            <person name="Fritzc C."/>
            <person name="Holzer E."/>
            <person name="Moestl D."/>
            <person name="Hilbert H."/>
            <person name="Borzym K."/>
            <person name="Langer I."/>
            <person name="Beck A."/>
            <person name="Lehrach H."/>
            <person name="Reinhardt R."/>
            <person name="Pohl T.M."/>
            <person name="Eger P."/>
            <person name="Zimmermann W."/>
            <person name="Wedler H."/>
            <person name="Wambutt R."/>
            <person name="Purnelle B."/>
            <person name="Goffeau A."/>
            <person name="Cadieu E."/>
            <person name="Dreano S."/>
            <person name="Gloux S."/>
            <person name="Lelaure V."/>
            <person name="Mottier S."/>
            <person name="Galibert F."/>
            <person name="Aves S.J."/>
            <person name="Xiang Z."/>
            <person name="Hunt C."/>
            <person name="Moore K."/>
            <person name="Hurst S.M."/>
            <person name="Lucas M."/>
            <person name="Rochet M."/>
            <person name="Gaillardin C."/>
            <person name="Tallada V.A."/>
            <person name="Garzon A."/>
            <person name="Thode G."/>
            <person name="Daga R.R."/>
            <person name="Cruzado L."/>
            <person name="Jimenez J."/>
            <person name="Sanchez M."/>
            <person name="del Rey F."/>
            <person name="Benito J."/>
            <person name="Dominguez A."/>
            <person name="Revuelta J.L."/>
            <person name="Moreno S."/>
            <person name="Armstrong J."/>
            <person name="Forsburg S.L."/>
            <person name="Cerutti L."/>
            <person name="Lowe T."/>
            <person name="McCombie W.R."/>
            <person name="Paulsen I."/>
            <person name="Potashkin J."/>
            <person name="Shpakovski G.V."/>
            <person name="Ussery D."/>
            <person name="Barrell B.G."/>
            <person name="Nurse P."/>
        </authorList>
    </citation>
    <scope>NUCLEOTIDE SEQUENCE [LARGE SCALE GENOMIC DNA]</scope>
    <source>
        <strain>972 / ATCC 24843</strain>
    </source>
</reference>
<reference key="2">
    <citation type="submission" date="1998-07" db="EMBL/GenBank/DDBJ databases">
        <title>S. pombe ribosomal protein L5 homolog.</title>
        <authorList>
            <person name="Kawamukai M."/>
        </authorList>
    </citation>
    <scope>NUCLEOTIDE SEQUENCE [MRNA] OF 47-294</scope>
</reference>
<reference key="3">
    <citation type="journal article" date="2006" name="Nat. Biotechnol.">
        <title>ORFeome cloning and global analysis of protein localization in the fission yeast Schizosaccharomyces pombe.</title>
        <authorList>
            <person name="Matsuyama A."/>
            <person name="Arai R."/>
            <person name="Yashiroda Y."/>
            <person name="Shirai A."/>
            <person name="Kamata A."/>
            <person name="Sekido S."/>
            <person name="Kobayashi Y."/>
            <person name="Hashimoto A."/>
            <person name="Hamamoto M."/>
            <person name="Hiraoka Y."/>
            <person name="Horinouchi S."/>
            <person name="Yoshida M."/>
        </authorList>
    </citation>
    <scope>SUBCELLULAR LOCATION [LARGE SCALE ANALYSIS]</scope>
</reference>